<sequence>MSGKKAAARLMIQGTSSNVGKSVLAAAFCRIFYQEGYHVAPFKAQNMALNSFITRSGGEMGRAQVVQAQAAGLEPDVRMNPVLLKPTGHTGSQVIVLGKAQGTLSALKYHGDYQRKTWPIVEEALHELLEEHEIVVIEGAGSPAEVNLKQNDIVNMRVAKEAQAPVLLVADIDRGGALASVVGTLELLEPEERQLVQGIVMNKFRGDIKLLQPALDFLEERTGIPVVGVVPFYDQFKIPEEDSVVLEEQNTSKRDQGKSRDEALDVAVIRLPYLSNFTDFDPFEDEPDVILRYVREPSELGEPDCVIIPGSKNTLSDLRFLWESGLGEKIIKFWQEDVPIIGICGGYQMLGRIVRDPLGTESDLKEIAGLGILPMETEFELDKHTVQSRGKVVGGELFLARCQGTEITGYEIHMGRSQGEGHSLFEIEAQETAYGDGMSAGSAVGTYLHGIFDNDPLRTALLEWLWERRGGTRPVGETMSQAAIREQSFNELADWVRNSMDMEKIRAMMGLHKG</sequence>
<name>COBQ_DESHY</name>
<accession>Q24Q41</accession>
<comment type="function">
    <text evidence="1">Catalyzes amidations at positions B, D, E, and G on adenosylcobyrinic A,C-diamide. NH(2) groups are provided by glutamine, and one molecule of ATP is hydrogenolyzed for each amidation.</text>
</comment>
<comment type="pathway">
    <text evidence="1">Cofactor biosynthesis; adenosylcobalamin biosynthesis.</text>
</comment>
<comment type="similarity">
    <text evidence="1">Belongs to the CobB/CobQ family. CobQ subfamily.</text>
</comment>
<gene>
    <name evidence="1" type="primary">cobQ</name>
    <name type="ordered locus">DSY4062</name>
</gene>
<reference key="1">
    <citation type="journal article" date="2006" name="J. Bacteriol.">
        <title>Complete genome sequence of the dehalorespiring bacterium Desulfitobacterium hafniense Y51 and comparison with Dehalococcoides ethenogenes 195.</title>
        <authorList>
            <person name="Nonaka H."/>
            <person name="Keresztes G."/>
            <person name="Shinoda Y."/>
            <person name="Ikenaga Y."/>
            <person name="Abe M."/>
            <person name="Naito K."/>
            <person name="Inatomi K."/>
            <person name="Furukawa K."/>
            <person name="Inui M."/>
            <person name="Yukawa H."/>
        </authorList>
    </citation>
    <scope>NUCLEOTIDE SEQUENCE [LARGE SCALE GENOMIC DNA]</scope>
    <source>
        <strain>Y51</strain>
    </source>
</reference>
<protein>
    <recommendedName>
        <fullName evidence="1">Cobyric acid synthase</fullName>
    </recommendedName>
</protein>
<keyword id="KW-0169">Cobalamin biosynthesis</keyword>
<keyword id="KW-0315">Glutamine amidotransferase</keyword>
<keyword id="KW-1185">Reference proteome</keyword>
<feature type="chain" id="PRO_0000332337" description="Cobyric acid synthase">
    <location>
        <begin position="1"/>
        <end position="514"/>
    </location>
</feature>
<feature type="domain" description="GATase cobBQ-type" evidence="1">
    <location>
        <begin position="263"/>
        <end position="457"/>
    </location>
</feature>
<feature type="active site" description="Nucleophile" evidence="1">
    <location>
        <position position="344"/>
    </location>
</feature>
<feature type="active site" evidence="1">
    <location>
        <position position="449"/>
    </location>
</feature>
<dbReference type="EMBL" id="AP008230">
    <property type="protein sequence ID" value="BAE85851.1"/>
    <property type="molecule type" value="Genomic_DNA"/>
</dbReference>
<dbReference type="RefSeq" id="WP_005812308.1">
    <property type="nucleotide sequence ID" value="NC_007907.1"/>
</dbReference>
<dbReference type="SMR" id="Q24Q41"/>
<dbReference type="STRING" id="138119.DSY4062"/>
<dbReference type="KEGG" id="dsy:DSY4062"/>
<dbReference type="eggNOG" id="COG1492">
    <property type="taxonomic scope" value="Bacteria"/>
</dbReference>
<dbReference type="HOGENOM" id="CLU_019250_2_2_9"/>
<dbReference type="UniPathway" id="UPA00148"/>
<dbReference type="Proteomes" id="UP000001946">
    <property type="component" value="Chromosome"/>
</dbReference>
<dbReference type="GO" id="GO:0015420">
    <property type="term" value="F:ABC-type vitamin B12 transporter activity"/>
    <property type="evidence" value="ECO:0007669"/>
    <property type="project" value="UniProtKB-UniRule"/>
</dbReference>
<dbReference type="GO" id="GO:0003824">
    <property type="term" value="F:catalytic activity"/>
    <property type="evidence" value="ECO:0007669"/>
    <property type="project" value="InterPro"/>
</dbReference>
<dbReference type="GO" id="GO:0009236">
    <property type="term" value="P:cobalamin biosynthetic process"/>
    <property type="evidence" value="ECO:0007669"/>
    <property type="project" value="UniProtKB-UniRule"/>
</dbReference>
<dbReference type="CDD" id="cd05389">
    <property type="entry name" value="CobQ_N"/>
    <property type="match status" value="1"/>
</dbReference>
<dbReference type="CDD" id="cd01750">
    <property type="entry name" value="GATase1_CobQ"/>
    <property type="match status" value="1"/>
</dbReference>
<dbReference type="Gene3D" id="3.40.50.880">
    <property type="match status" value="1"/>
</dbReference>
<dbReference type="Gene3D" id="3.40.50.300">
    <property type="entry name" value="P-loop containing nucleotide triphosphate hydrolases"/>
    <property type="match status" value="1"/>
</dbReference>
<dbReference type="HAMAP" id="MF_00028">
    <property type="entry name" value="CobQ"/>
    <property type="match status" value="1"/>
</dbReference>
<dbReference type="InterPro" id="IPR029062">
    <property type="entry name" value="Class_I_gatase-like"/>
</dbReference>
<dbReference type="InterPro" id="IPR002586">
    <property type="entry name" value="CobQ/CobB/MinD/ParA_Nub-bd_dom"/>
</dbReference>
<dbReference type="InterPro" id="IPR033949">
    <property type="entry name" value="CobQ_GATase1"/>
</dbReference>
<dbReference type="InterPro" id="IPR047045">
    <property type="entry name" value="CobQ_N"/>
</dbReference>
<dbReference type="InterPro" id="IPR004459">
    <property type="entry name" value="CobQ_synth"/>
</dbReference>
<dbReference type="InterPro" id="IPR011698">
    <property type="entry name" value="GATase_3"/>
</dbReference>
<dbReference type="InterPro" id="IPR027417">
    <property type="entry name" value="P-loop_NTPase"/>
</dbReference>
<dbReference type="NCBIfam" id="TIGR00313">
    <property type="entry name" value="cobQ"/>
    <property type="match status" value="1"/>
</dbReference>
<dbReference type="NCBIfam" id="NF001989">
    <property type="entry name" value="PRK00784.1"/>
    <property type="match status" value="1"/>
</dbReference>
<dbReference type="PANTHER" id="PTHR21343:SF1">
    <property type="entry name" value="COBYRIC ACID SYNTHASE"/>
    <property type="match status" value="1"/>
</dbReference>
<dbReference type="PANTHER" id="PTHR21343">
    <property type="entry name" value="DETHIOBIOTIN SYNTHETASE"/>
    <property type="match status" value="1"/>
</dbReference>
<dbReference type="Pfam" id="PF01656">
    <property type="entry name" value="CbiA"/>
    <property type="match status" value="1"/>
</dbReference>
<dbReference type="Pfam" id="PF07685">
    <property type="entry name" value="GATase_3"/>
    <property type="match status" value="1"/>
</dbReference>
<dbReference type="SUPFAM" id="SSF52317">
    <property type="entry name" value="Class I glutamine amidotransferase-like"/>
    <property type="match status" value="1"/>
</dbReference>
<dbReference type="SUPFAM" id="SSF52540">
    <property type="entry name" value="P-loop containing nucleoside triphosphate hydrolases"/>
    <property type="match status" value="1"/>
</dbReference>
<dbReference type="PROSITE" id="PS51274">
    <property type="entry name" value="GATASE_COBBQ"/>
    <property type="match status" value="1"/>
</dbReference>
<organism>
    <name type="scientific">Desulfitobacterium hafniense (strain Y51)</name>
    <dbReference type="NCBI Taxonomy" id="138119"/>
    <lineage>
        <taxon>Bacteria</taxon>
        <taxon>Bacillati</taxon>
        <taxon>Bacillota</taxon>
        <taxon>Clostridia</taxon>
        <taxon>Eubacteriales</taxon>
        <taxon>Desulfitobacteriaceae</taxon>
        <taxon>Desulfitobacterium</taxon>
    </lineage>
</organism>
<proteinExistence type="inferred from homology"/>
<evidence type="ECO:0000255" key="1">
    <source>
        <dbReference type="HAMAP-Rule" id="MF_00028"/>
    </source>
</evidence>